<sequence length="279" mass="32418">MNYNNECLSMLKLGKKTEYKSTYDPSLLQAVPRYLNRESLGIVKQQPFTVGADIWTLYELSWLNQNGVPQVAIADVIIDSSSSNIIESKSFKLYLNSFNQMRFPSREDVQRRIQSDLSKCAQGDVTVQIYKLSDFAMRSISEFNGECIDNQNICINRYDFTRESLQGIANGEIVEERLVSHLLKSNCLITSQPDWGSIQICYVGKQLDREKLLRYLVSFREHNEFHEQCVERIFCDLMEFAQPQKLTVYARYTRRGGLDINPFRSNFEGIPENLRMVRQ</sequence>
<keyword id="KW-0963">Cytoplasm</keyword>
<keyword id="KW-0521">NADP</keyword>
<keyword id="KW-0560">Oxidoreductase</keyword>
<keyword id="KW-0671">Queuosine biosynthesis</keyword>
<keyword id="KW-1185">Reference proteome</keyword>
<proteinExistence type="inferred from homology"/>
<gene>
    <name evidence="1" type="primary">queF</name>
    <name type="ordered locus">HAPS_0318</name>
</gene>
<reference key="1">
    <citation type="journal article" date="2009" name="J. Bacteriol.">
        <title>Complete genome sequence of Haemophilus parasuis SH0165.</title>
        <authorList>
            <person name="Yue M."/>
            <person name="Yang F."/>
            <person name="Yang J."/>
            <person name="Bei W."/>
            <person name="Cai X."/>
            <person name="Chen L."/>
            <person name="Dong J."/>
            <person name="Zhou R."/>
            <person name="Jin M."/>
            <person name="Jin Q."/>
            <person name="Chen H."/>
        </authorList>
    </citation>
    <scope>NUCLEOTIDE SEQUENCE [LARGE SCALE GENOMIC DNA]</scope>
    <source>
        <strain>SH0165</strain>
    </source>
</reference>
<protein>
    <recommendedName>
        <fullName evidence="1">NADPH-dependent 7-cyano-7-deazaguanine reductase</fullName>
        <ecNumber evidence="1">1.7.1.13</ecNumber>
    </recommendedName>
    <alternativeName>
        <fullName evidence="1">7-cyano-7-carbaguanine reductase</fullName>
    </alternativeName>
    <alternativeName>
        <fullName evidence="1">NADPH-dependent nitrile oxidoreductase</fullName>
    </alternativeName>
    <alternativeName>
        <fullName evidence="1">PreQ(0) reductase</fullName>
    </alternativeName>
</protein>
<feature type="chain" id="PRO_1000213069" description="NADPH-dependent 7-cyano-7-deazaguanine reductase">
    <location>
        <begin position="1"/>
        <end position="279"/>
    </location>
</feature>
<feature type="active site" description="Thioimide intermediate" evidence="1">
    <location>
        <position position="187"/>
    </location>
</feature>
<feature type="active site" description="Proton donor" evidence="1">
    <location>
        <position position="194"/>
    </location>
</feature>
<feature type="binding site" evidence="1">
    <location>
        <begin position="86"/>
        <end position="88"/>
    </location>
    <ligand>
        <name>substrate</name>
    </ligand>
</feature>
<feature type="binding site" evidence="1">
    <location>
        <begin position="88"/>
        <end position="89"/>
    </location>
    <ligand>
        <name>NADPH</name>
        <dbReference type="ChEBI" id="CHEBI:57783"/>
    </ligand>
</feature>
<feature type="binding site" evidence="1">
    <location>
        <begin position="226"/>
        <end position="227"/>
    </location>
    <ligand>
        <name>substrate</name>
    </ligand>
</feature>
<feature type="binding site" evidence="1">
    <location>
        <begin position="255"/>
        <end position="256"/>
    </location>
    <ligand>
        <name>NADPH</name>
        <dbReference type="ChEBI" id="CHEBI:57783"/>
    </ligand>
</feature>
<accession>B8F3V1</accession>
<dbReference type="EC" id="1.7.1.13" evidence="1"/>
<dbReference type="EMBL" id="CP001321">
    <property type="protein sequence ID" value="ACL32003.1"/>
    <property type="molecule type" value="Genomic_DNA"/>
</dbReference>
<dbReference type="RefSeq" id="WP_010786825.1">
    <property type="nucleotide sequence ID" value="NC_011852.1"/>
</dbReference>
<dbReference type="SMR" id="B8F3V1"/>
<dbReference type="STRING" id="557723.HAPS_0318"/>
<dbReference type="GeneID" id="66618753"/>
<dbReference type="KEGG" id="hap:HAPS_0318"/>
<dbReference type="HOGENOM" id="CLU_054738_0_0_6"/>
<dbReference type="UniPathway" id="UPA00392"/>
<dbReference type="Proteomes" id="UP000006743">
    <property type="component" value="Chromosome"/>
</dbReference>
<dbReference type="GO" id="GO:0005737">
    <property type="term" value="C:cytoplasm"/>
    <property type="evidence" value="ECO:0007669"/>
    <property type="project" value="UniProtKB-SubCell"/>
</dbReference>
<dbReference type="GO" id="GO:0033739">
    <property type="term" value="F:preQ1 synthase activity"/>
    <property type="evidence" value="ECO:0007669"/>
    <property type="project" value="UniProtKB-UniRule"/>
</dbReference>
<dbReference type="GO" id="GO:0008616">
    <property type="term" value="P:queuosine biosynthetic process"/>
    <property type="evidence" value="ECO:0007669"/>
    <property type="project" value="UniProtKB-UniRule"/>
</dbReference>
<dbReference type="GO" id="GO:0006400">
    <property type="term" value="P:tRNA modification"/>
    <property type="evidence" value="ECO:0007669"/>
    <property type="project" value="UniProtKB-UniRule"/>
</dbReference>
<dbReference type="Gene3D" id="3.30.1130.10">
    <property type="match status" value="2"/>
</dbReference>
<dbReference type="HAMAP" id="MF_00817">
    <property type="entry name" value="QueF_type2"/>
    <property type="match status" value="1"/>
</dbReference>
<dbReference type="InterPro" id="IPR043133">
    <property type="entry name" value="GTP-CH-I_C/QueF"/>
</dbReference>
<dbReference type="InterPro" id="IPR050084">
    <property type="entry name" value="NADPH_dep_7-cyano-7-deazaG_red"/>
</dbReference>
<dbReference type="InterPro" id="IPR029500">
    <property type="entry name" value="QueF"/>
</dbReference>
<dbReference type="InterPro" id="IPR029139">
    <property type="entry name" value="QueF_N"/>
</dbReference>
<dbReference type="InterPro" id="IPR016428">
    <property type="entry name" value="QueF_type2"/>
</dbReference>
<dbReference type="NCBIfam" id="TIGR03138">
    <property type="entry name" value="QueF"/>
    <property type="match status" value="1"/>
</dbReference>
<dbReference type="PANTHER" id="PTHR34354">
    <property type="entry name" value="NADPH-DEPENDENT 7-CYANO-7-DEAZAGUANINE REDUCTASE"/>
    <property type="match status" value="1"/>
</dbReference>
<dbReference type="PANTHER" id="PTHR34354:SF1">
    <property type="entry name" value="NADPH-DEPENDENT 7-CYANO-7-DEAZAGUANINE REDUCTASE"/>
    <property type="match status" value="1"/>
</dbReference>
<dbReference type="Pfam" id="PF14489">
    <property type="entry name" value="QueF"/>
    <property type="match status" value="1"/>
</dbReference>
<dbReference type="Pfam" id="PF14819">
    <property type="entry name" value="QueF_N"/>
    <property type="match status" value="1"/>
</dbReference>
<dbReference type="PIRSF" id="PIRSF004750">
    <property type="entry name" value="Nitrile_oxidored_YqcD_prd"/>
    <property type="match status" value="1"/>
</dbReference>
<dbReference type="SUPFAM" id="SSF55620">
    <property type="entry name" value="Tetrahydrobiopterin biosynthesis enzymes-like"/>
    <property type="match status" value="1"/>
</dbReference>
<comment type="function">
    <text evidence="1">Catalyzes the NADPH-dependent reduction of 7-cyano-7-deazaguanine (preQ0) to 7-aminomethyl-7-deazaguanine (preQ1).</text>
</comment>
<comment type="catalytic activity">
    <reaction evidence="1">
        <text>7-aminomethyl-7-carbaguanine + 2 NADP(+) = 7-cyano-7-deazaguanine + 2 NADPH + 3 H(+)</text>
        <dbReference type="Rhea" id="RHEA:13409"/>
        <dbReference type="ChEBI" id="CHEBI:15378"/>
        <dbReference type="ChEBI" id="CHEBI:45075"/>
        <dbReference type="ChEBI" id="CHEBI:57783"/>
        <dbReference type="ChEBI" id="CHEBI:58349"/>
        <dbReference type="ChEBI" id="CHEBI:58703"/>
        <dbReference type="EC" id="1.7.1.13"/>
    </reaction>
</comment>
<comment type="pathway">
    <text evidence="1">tRNA modification; tRNA-queuosine biosynthesis.</text>
</comment>
<comment type="subunit">
    <text evidence="1">Homodimer.</text>
</comment>
<comment type="subcellular location">
    <subcellularLocation>
        <location evidence="1">Cytoplasm</location>
    </subcellularLocation>
</comment>
<comment type="similarity">
    <text evidence="1">Belongs to the GTP cyclohydrolase I family. QueF type 2 subfamily.</text>
</comment>
<evidence type="ECO:0000255" key="1">
    <source>
        <dbReference type="HAMAP-Rule" id="MF_00817"/>
    </source>
</evidence>
<name>QUEF_GLAP5</name>
<organism>
    <name type="scientific">Glaesserella parasuis serovar 5 (strain SH0165)</name>
    <name type="common">Haemophilus parasuis</name>
    <dbReference type="NCBI Taxonomy" id="557723"/>
    <lineage>
        <taxon>Bacteria</taxon>
        <taxon>Pseudomonadati</taxon>
        <taxon>Pseudomonadota</taxon>
        <taxon>Gammaproteobacteria</taxon>
        <taxon>Pasteurellales</taxon>
        <taxon>Pasteurellaceae</taxon>
        <taxon>Glaesserella</taxon>
    </lineage>
</organism>